<keyword id="KW-0067">ATP-binding</keyword>
<keyword id="KW-0378">Hydrolase</keyword>
<keyword id="KW-0547">Nucleotide-binding</keyword>
<proteinExistence type="inferred from homology"/>
<feature type="chain" id="PRO_1000045214" description="5-oxoprolinase subunit A">
    <location>
        <begin position="1"/>
        <end position="250"/>
    </location>
</feature>
<evidence type="ECO:0000255" key="1">
    <source>
        <dbReference type="HAMAP-Rule" id="MF_00691"/>
    </source>
</evidence>
<protein>
    <recommendedName>
        <fullName evidence="1">5-oxoprolinase subunit A</fullName>
        <shortName evidence="1">5-OPase subunit A</shortName>
        <ecNumber evidence="1">3.5.2.9</ecNumber>
    </recommendedName>
    <alternativeName>
        <fullName evidence="1">5-oxoprolinase (ATP-hydrolyzing) subunit A</fullName>
    </alternativeName>
</protein>
<reference key="1">
    <citation type="journal article" date="2009" name="Genome Biol.">
        <title>Genomic and genetic analyses of diversity and plant interactions of Pseudomonas fluorescens.</title>
        <authorList>
            <person name="Silby M.W."/>
            <person name="Cerdeno-Tarraga A.M."/>
            <person name="Vernikos G.S."/>
            <person name="Giddens S.R."/>
            <person name="Jackson R.W."/>
            <person name="Preston G.M."/>
            <person name="Zhang X.-X."/>
            <person name="Moon C.D."/>
            <person name="Gehrig S.M."/>
            <person name="Godfrey S.A.C."/>
            <person name="Knight C.G."/>
            <person name="Malone J.G."/>
            <person name="Robinson Z."/>
            <person name="Spiers A.J."/>
            <person name="Harris S."/>
            <person name="Challis G.L."/>
            <person name="Yaxley A.M."/>
            <person name="Harris D."/>
            <person name="Seeger K."/>
            <person name="Murphy L."/>
            <person name="Rutter S."/>
            <person name="Squares R."/>
            <person name="Quail M.A."/>
            <person name="Saunders E."/>
            <person name="Mavromatis K."/>
            <person name="Brettin T.S."/>
            <person name="Bentley S.D."/>
            <person name="Hothersall J."/>
            <person name="Stephens E."/>
            <person name="Thomas C.M."/>
            <person name="Parkhill J."/>
            <person name="Levy S.B."/>
            <person name="Rainey P.B."/>
            <person name="Thomson N.R."/>
        </authorList>
    </citation>
    <scope>NUCLEOTIDE SEQUENCE [LARGE SCALE GENOMIC DNA]</scope>
    <source>
        <strain>Pf0-1</strain>
    </source>
</reference>
<accession>Q3KGF8</accession>
<dbReference type="EC" id="3.5.2.9" evidence="1"/>
<dbReference type="EMBL" id="CP000094">
    <property type="protein sequence ID" value="ABA73148.1"/>
    <property type="molecule type" value="Genomic_DNA"/>
</dbReference>
<dbReference type="RefSeq" id="WP_011332937.1">
    <property type="nucleotide sequence ID" value="NC_007492.2"/>
</dbReference>
<dbReference type="SMR" id="Q3KGF8"/>
<dbReference type="KEGG" id="pfo:Pfl01_1405"/>
<dbReference type="eggNOG" id="COG1540">
    <property type="taxonomic scope" value="Bacteria"/>
</dbReference>
<dbReference type="HOGENOM" id="CLU_069535_0_0_6"/>
<dbReference type="Proteomes" id="UP000002704">
    <property type="component" value="Chromosome"/>
</dbReference>
<dbReference type="GO" id="GO:0017168">
    <property type="term" value="F:5-oxoprolinase (ATP-hydrolyzing) activity"/>
    <property type="evidence" value="ECO:0007669"/>
    <property type="project" value="UniProtKB-UniRule"/>
</dbReference>
<dbReference type="GO" id="GO:0005524">
    <property type="term" value="F:ATP binding"/>
    <property type="evidence" value="ECO:0007669"/>
    <property type="project" value="UniProtKB-UniRule"/>
</dbReference>
<dbReference type="GO" id="GO:0005975">
    <property type="term" value="P:carbohydrate metabolic process"/>
    <property type="evidence" value="ECO:0007669"/>
    <property type="project" value="InterPro"/>
</dbReference>
<dbReference type="CDD" id="cd10787">
    <property type="entry name" value="LamB_YcsF_like"/>
    <property type="match status" value="1"/>
</dbReference>
<dbReference type="Gene3D" id="3.20.20.370">
    <property type="entry name" value="Glycoside hydrolase/deacetylase"/>
    <property type="match status" value="1"/>
</dbReference>
<dbReference type="HAMAP" id="MF_00691">
    <property type="entry name" value="PxpA"/>
    <property type="match status" value="1"/>
</dbReference>
<dbReference type="InterPro" id="IPR011330">
    <property type="entry name" value="Glyco_hydro/deAcase_b/a-brl"/>
</dbReference>
<dbReference type="InterPro" id="IPR005501">
    <property type="entry name" value="LamB/YcsF/PxpA-like"/>
</dbReference>
<dbReference type="NCBIfam" id="NF003814">
    <property type="entry name" value="PRK05406.1-3"/>
    <property type="match status" value="1"/>
</dbReference>
<dbReference type="NCBIfam" id="NF003816">
    <property type="entry name" value="PRK05406.1-5"/>
    <property type="match status" value="1"/>
</dbReference>
<dbReference type="PANTHER" id="PTHR30292:SF0">
    <property type="entry name" value="5-OXOPROLINASE SUBUNIT A"/>
    <property type="match status" value="1"/>
</dbReference>
<dbReference type="PANTHER" id="PTHR30292">
    <property type="entry name" value="UNCHARACTERIZED PROTEIN YBGL-RELATED"/>
    <property type="match status" value="1"/>
</dbReference>
<dbReference type="Pfam" id="PF03746">
    <property type="entry name" value="LamB_YcsF"/>
    <property type="match status" value="1"/>
</dbReference>
<dbReference type="SUPFAM" id="SSF88713">
    <property type="entry name" value="Glycoside hydrolase/deacetylase"/>
    <property type="match status" value="1"/>
</dbReference>
<name>PXPA_PSEPF</name>
<sequence length="250" mass="26850">MSRLLLNCDIGESFGSWTMGLDAEVMPFIDCANIACGFHAGDPSIMRKTVSLALSHGVKIGAHPAYQDLVGFGRRSMAYTAQELQDILHYQIGALDGICRAQGGKVSYVKPHGAMYNDMMANPAQLRAVIQAVVAYDRSLPLMLMATRDNTAAQQLGDEYGVTLWFEAFADRAYDSAGRLVSRQLPGAVHHDCETIIGQALTIARGDNLTASDGSALHLQANTLCVHGDNASSVAAVQRIRQALNEQSAP</sequence>
<gene>
    <name evidence="1" type="primary">pxpA</name>
    <name type="ordered locus">Pfl01_1405</name>
</gene>
<comment type="function">
    <text evidence="1">Catalyzes the cleavage of 5-oxoproline to form L-glutamate coupled to the hydrolysis of ATP to ADP and inorganic phosphate.</text>
</comment>
<comment type="catalytic activity">
    <reaction evidence="1">
        <text>5-oxo-L-proline + ATP + 2 H2O = L-glutamate + ADP + phosphate + H(+)</text>
        <dbReference type="Rhea" id="RHEA:10348"/>
        <dbReference type="ChEBI" id="CHEBI:15377"/>
        <dbReference type="ChEBI" id="CHEBI:15378"/>
        <dbReference type="ChEBI" id="CHEBI:29985"/>
        <dbReference type="ChEBI" id="CHEBI:30616"/>
        <dbReference type="ChEBI" id="CHEBI:43474"/>
        <dbReference type="ChEBI" id="CHEBI:58402"/>
        <dbReference type="ChEBI" id="CHEBI:456216"/>
        <dbReference type="EC" id="3.5.2.9"/>
    </reaction>
</comment>
<comment type="subunit">
    <text evidence="1">Forms a complex composed of PxpA, PxpB and PxpC.</text>
</comment>
<comment type="similarity">
    <text evidence="1">Belongs to the LamB/PxpA family.</text>
</comment>
<organism>
    <name type="scientific">Pseudomonas fluorescens (strain Pf0-1)</name>
    <dbReference type="NCBI Taxonomy" id="205922"/>
    <lineage>
        <taxon>Bacteria</taxon>
        <taxon>Pseudomonadati</taxon>
        <taxon>Pseudomonadota</taxon>
        <taxon>Gammaproteobacteria</taxon>
        <taxon>Pseudomonadales</taxon>
        <taxon>Pseudomonadaceae</taxon>
        <taxon>Pseudomonas</taxon>
    </lineage>
</organism>